<proteinExistence type="inferred from homology"/>
<comment type="function">
    <text evidence="1">Involved in allosteric regulation of aspartate carbamoyltransferase.</text>
</comment>
<comment type="cofactor">
    <cofactor evidence="1">
        <name>Zn(2+)</name>
        <dbReference type="ChEBI" id="CHEBI:29105"/>
    </cofactor>
    <text evidence="1">Binds 1 zinc ion per subunit.</text>
</comment>
<comment type="subunit">
    <text evidence="1">Contains catalytic and regulatory chains.</text>
</comment>
<comment type="similarity">
    <text evidence="1">Belongs to the PyrI family.</text>
</comment>
<sequence>MTHDNKLQVEAIKRGTVIDHIPAQIGFKLLSLFKLTETDQRITIGLNLPSGEMGRKDLIKIENTFLSEDQVDQLALYAPQATVNRIDNYEVVGKSRPSLPERIDNVLVCPNSNCISHAEPVSSSFAVLKRANDIALKCKYCEKEFSHNVVLAN</sequence>
<organism>
    <name type="scientific">Shigella dysenteriae serotype 1 (strain Sd197)</name>
    <dbReference type="NCBI Taxonomy" id="300267"/>
    <lineage>
        <taxon>Bacteria</taxon>
        <taxon>Pseudomonadati</taxon>
        <taxon>Pseudomonadota</taxon>
        <taxon>Gammaproteobacteria</taxon>
        <taxon>Enterobacterales</taxon>
        <taxon>Enterobacteriaceae</taxon>
        <taxon>Shigella</taxon>
    </lineage>
</organism>
<name>PYRI_SHIDS</name>
<gene>
    <name evidence="1" type="primary">pyrI</name>
    <name type="ordered locus">SDY_4263</name>
</gene>
<evidence type="ECO:0000255" key="1">
    <source>
        <dbReference type="HAMAP-Rule" id="MF_00002"/>
    </source>
</evidence>
<keyword id="KW-0479">Metal-binding</keyword>
<keyword id="KW-0665">Pyrimidine biosynthesis</keyword>
<keyword id="KW-1185">Reference proteome</keyword>
<keyword id="KW-0862">Zinc</keyword>
<feature type="chain" id="PRO_1000000049" description="Aspartate carbamoyltransferase regulatory chain">
    <location>
        <begin position="1"/>
        <end position="153"/>
    </location>
</feature>
<feature type="binding site" evidence="1">
    <location>
        <position position="109"/>
    </location>
    <ligand>
        <name>Zn(2+)</name>
        <dbReference type="ChEBI" id="CHEBI:29105"/>
    </ligand>
</feature>
<feature type="binding site" evidence="1">
    <location>
        <position position="114"/>
    </location>
    <ligand>
        <name>Zn(2+)</name>
        <dbReference type="ChEBI" id="CHEBI:29105"/>
    </ligand>
</feature>
<feature type="binding site" evidence="1">
    <location>
        <position position="138"/>
    </location>
    <ligand>
        <name>Zn(2+)</name>
        <dbReference type="ChEBI" id="CHEBI:29105"/>
    </ligand>
</feature>
<feature type="binding site" evidence="1">
    <location>
        <position position="141"/>
    </location>
    <ligand>
        <name>Zn(2+)</name>
        <dbReference type="ChEBI" id="CHEBI:29105"/>
    </ligand>
</feature>
<dbReference type="EMBL" id="CP000034">
    <property type="protein sequence ID" value="ABB64164.1"/>
    <property type="molecule type" value="Genomic_DNA"/>
</dbReference>
<dbReference type="RefSeq" id="WP_000148580.1">
    <property type="nucleotide sequence ID" value="NC_007606.1"/>
</dbReference>
<dbReference type="RefSeq" id="YP_405655.1">
    <property type="nucleotide sequence ID" value="NC_007606.1"/>
</dbReference>
<dbReference type="SMR" id="Q328U1"/>
<dbReference type="STRING" id="300267.SDY_4263"/>
<dbReference type="EnsemblBacteria" id="ABB64164">
    <property type="protein sequence ID" value="ABB64164"/>
    <property type="gene ID" value="SDY_4263"/>
</dbReference>
<dbReference type="KEGG" id="sdy:SDY_4263"/>
<dbReference type="PATRIC" id="fig|300267.13.peg.5026"/>
<dbReference type="HOGENOM" id="CLU_128576_0_0_6"/>
<dbReference type="Proteomes" id="UP000002716">
    <property type="component" value="Chromosome"/>
</dbReference>
<dbReference type="GO" id="GO:0009347">
    <property type="term" value="C:aspartate carbamoyltransferase complex"/>
    <property type="evidence" value="ECO:0007669"/>
    <property type="project" value="InterPro"/>
</dbReference>
<dbReference type="GO" id="GO:0046872">
    <property type="term" value="F:metal ion binding"/>
    <property type="evidence" value="ECO:0007669"/>
    <property type="project" value="UniProtKB-KW"/>
</dbReference>
<dbReference type="GO" id="GO:0006207">
    <property type="term" value="P:'de novo' pyrimidine nucleobase biosynthetic process"/>
    <property type="evidence" value="ECO:0007669"/>
    <property type="project" value="InterPro"/>
</dbReference>
<dbReference type="GO" id="GO:0006221">
    <property type="term" value="P:pyrimidine nucleotide biosynthetic process"/>
    <property type="evidence" value="ECO:0007669"/>
    <property type="project" value="UniProtKB-UniRule"/>
</dbReference>
<dbReference type="FunFam" id="2.30.30.20:FF:000001">
    <property type="entry name" value="Aspartate carbamoyltransferase regulatory chain"/>
    <property type="match status" value="1"/>
</dbReference>
<dbReference type="FunFam" id="3.30.70.140:FF:000001">
    <property type="entry name" value="Aspartate carbamoyltransferase regulatory chain"/>
    <property type="match status" value="1"/>
</dbReference>
<dbReference type="Gene3D" id="2.30.30.20">
    <property type="entry name" value="Aspartate carbamoyltransferase regulatory subunit, C-terminal domain"/>
    <property type="match status" value="1"/>
</dbReference>
<dbReference type="Gene3D" id="3.30.70.140">
    <property type="entry name" value="Aspartate carbamoyltransferase regulatory subunit, N-terminal domain"/>
    <property type="match status" value="1"/>
</dbReference>
<dbReference type="HAMAP" id="MF_00002">
    <property type="entry name" value="Asp_carb_tr_reg"/>
    <property type="match status" value="1"/>
</dbReference>
<dbReference type="InterPro" id="IPR020545">
    <property type="entry name" value="Asp_carbamoyltransf_reg_N"/>
</dbReference>
<dbReference type="InterPro" id="IPR002801">
    <property type="entry name" value="Asp_carbamoylTrfase_reg"/>
</dbReference>
<dbReference type="InterPro" id="IPR020542">
    <property type="entry name" value="Asp_carbamoyltrfase_reg_C"/>
</dbReference>
<dbReference type="InterPro" id="IPR036792">
    <property type="entry name" value="Asp_carbatrfase_reg_C_sf"/>
</dbReference>
<dbReference type="InterPro" id="IPR036793">
    <property type="entry name" value="Asp_carbatrfase_reg_N_sf"/>
</dbReference>
<dbReference type="NCBIfam" id="TIGR00240">
    <property type="entry name" value="ATCase_reg"/>
    <property type="match status" value="1"/>
</dbReference>
<dbReference type="PANTHER" id="PTHR35805">
    <property type="entry name" value="ASPARTATE CARBAMOYLTRANSFERASE REGULATORY CHAIN"/>
    <property type="match status" value="1"/>
</dbReference>
<dbReference type="PANTHER" id="PTHR35805:SF1">
    <property type="entry name" value="ASPARTATE CARBAMOYLTRANSFERASE REGULATORY CHAIN"/>
    <property type="match status" value="1"/>
</dbReference>
<dbReference type="Pfam" id="PF01948">
    <property type="entry name" value="PyrI"/>
    <property type="match status" value="1"/>
</dbReference>
<dbReference type="Pfam" id="PF02748">
    <property type="entry name" value="PyrI_C"/>
    <property type="match status" value="1"/>
</dbReference>
<dbReference type="SUPFAM" id="SSF57825">
    <property type="entry name" value="Aspartate carbamoyltransferase, Regulatory-chain, C-terminal domain"/>
    <property type="match status" value="1"/>
</dbReference>
<dbReference type="SUPFAM" id="SSF54893">
    <property type="entry name" value="Aspartate carbamoyltransferase, Regulatory-chain, N-terminal domain"/>
    <property type="match status" value="1"/>
</dbReference>
<protein>
    <recommendedName>
        <fullName evidence="1">Aspartate carbamoyltransferase regulatory chain</fullName>
    </recommendedName>
</protein>
<accession>Q328U1</accession>
<reference key="1">
    <citation type="journal article" date="2005" name="Nucleic Acids Res.">
        <title>Genome dynamics and diversity of Shigella species, the etiologic agents of bacillary dysentery.</title>
        <authorList>
            <person name="Yang F."/>
            <person name="Yang J."/>
            <person name="Zhang X."/>
            <person name="Chen L."/>
            <person name="Jiang Y."/>
            <person name="Yan Y."/>
            <person name="Tang X."/>
            <person name="Wang J."/>
            <person name="Xiong Z."/>
            <person name="Dong J."/>
            <person name="Xue Y."/>
            <person name="Zhu Y."/>
            <person name="Xu X."/>
            <person name="Sun L."/>
            <person name="Chen S."/>
            <person name="Nie H."/>
            <person name="Peng J."/>
            <person name="Xu J."/>
            <person name="Wang Y."/>
            <person name="Yuan Z."/>
            <person name="Wen Y."/>
            <person name="Yao Z."/>
            <person name="Shen Y."/>
            <person name="Qiang B."/>
            <person name="Hou Y."/>
            <person name="Yu J."/>
            <person name="Jin Q."/>
        </authorList>
    </citation>
    <scope>NUCLEOTIDE SEQUENCE [LARGE SCALE GENOMIC DNA]</scope>
    <source>
        <strain>Sd197</strain>
    </source>
</reference>